<gene>
    <name evidence="1" type="primary">rpsQ</name>
    <name type="ordered locus">Avin_06340</name>
</gene>
<comment type="function">
    <text evidence="1">One of the primary rRNA binding proteins, it binds specifically to the 5'-end of 16S ribosomal RNA.</text>
</comment>
<comment type="subunit">
    <text evidence="1">Part of the 30S ribosomal subunit.</text>
</comment>
<comment type="similarity">
    <text evidence="1">Belongs to the universal ribosomal protein uS17 family.</text>
</comment>
<name>RS17_AZOVD</name>
<feature type="chain" id="PRO_1000214776" description="Small ribosomal subunit protein uS17">
    <location>
        <begin position="1"/>
        <end position="88"/>
    </location>
</feature>
<keyword id="KW-0687">Ribonucleoprotein</keyword>
<keyword id="KW-0689">Ribosomal protein</keyword>
<keyword id="KW-0694">RNA-binding</keyword>
<keyword id="KW-0699">rRNA-binding</keyword>
<evidence type="ECO:0000255" key="1">
    <source>
        <dbReference type="HAMAP-Rule" id="MF_01345"/>
    </source>
</evidence>
<evidence type="ECO:0000305" key="2"/>
<accession>C1DKM2</accession>
<proteinExistence type="inferred from homology"/>
<organism>
    <name type="scientific">Azotobacter vinelandii (strain DJ / ATCC BAA-1303)</name>
    <dbReference type="NCBI Taxonomy" id="322710"/>
    <lineage>
        <taxon>Bacteria</taxon>
        <taxon>Pseudomonadati</taxon>
        <taxon>Pseudomonadota</taxon>
        <taxon>Gammaproteobacteria</taxon>
        <taxon>Pseudomonadales</taxon>
        <taxon>Pseudomonadaceae</taxon>
        <taxon>Azotobacter</taxon>
    </lineage>
</organism>
<protein>
    <recommendedName>
        <fullName evidence="1">Small ribosomal subunit protein uS17</fullName>
    </recommendedName>
    <alternativeName>
        <fullName evidence="2">30S ribosomal protein S17</fullName>
    </alternativeName>
</protein>
<reference key="1">
    <citation type="journal article" date="2009" name="J. Bacteriol.">
        <title>Genome sequence of Azotobacter vinelandii, an obligate aerobe specialized to support diverse anaerobic metabolic processes.</title>
        <authorList>
            <person name="Setubal J.C."/>
            <person name="Dos Santos P."/>
            <person name="Goldman B.S."/>
            <person name="Ertesvaag H."/>
            <person name="Espin G."/>
            <person name="Rubio L.M."/>
            <person name="Valla S."/>
            <person name="Almeida N.F."/>
            <person name="Balasubramanian D."/>
            <person name="Cromes L."/>
            <person name="Curatti L."/>
            <person name="Du Z."/>
            <person name="Godsy E."/>
            <person name="Goodner B."/>
            <person name="Hellner-Burris K."/>
            <person name="Hernandez J.A."/>
            <person name="Houmiel K."/>
            <person name="Imperial J."/>
            <person name="Kennedy C."/>
            <person name="Larson T.J."/>
            <person name="Latreille P."/>
            <person name="Ligon L.S."/>
            <person name="Lu J."/>
            <person name="Maerk M."/>
            <person name="Miller N.M."/>
            <person name="Norton S."/>
            <person name="O'Carroll I.P."/>
            <person name="Paulsen I."/>
            <person name="Raulfs E.C."/>
            <person name="Roemer R."/>
            <person name="Rosser J."/>
            <person name="Segura D."/>
            <person name="Slater S."/>
            <person name="Stricklin S.L."/>
            <person name="Studholme D.J."/>
            <person name="Sun J."/>
            <person name="Viana C.J."/>
            <person name="Wallin E."/>
            <person name="Wang B."/>
            <person name="Wheeler C."/>
            <person name="Zhu H."/>
            <person name="Dean D.R."/>
            <person name="Dixon R."/>
            <person name="Wood D."/>
        </authorList>
    </citation>
    <scope>NUCLEOTIDE SEQUENCE [LARGE SCALE GENOMIC DNA]</scope>
    <source>
        <strain>DJ / ATCC BAA-1303</strain>
    </source>
</reference>
<sequence length="88" mass="10148">MAEAQKTVRTLTGRVVSDKMDKTITVLIERRVKHPIYGKYVKRSTKLHAHDETNQCRIGDTVTIRETRPLAKTKSWMLVEVVERAVEV</sequence>
<dbReference type="EMBL" id="CP001157">
    <property type="protein sequence ID" value="ACO76885.1"/>
    <property type="molecule type" value="Genomic_DNA"/>
</dbReference>
<dbReference type="RefSeq" id="WP_012699311.1">
    <property type="nucleotide sequence ID" value="NZ_CP144736.1"/>
</dbReference>
<dbReference type="SMR" id="C1DKM2"/>
<dbReference type="STRING" id="322710.Avin_06340"/>
<dbReference type="EnsemblBacteria" id="ACO76885">
    <property type="protein sequence ID" value="ACO76885"/>
    <property type="gene ID" value="Avin_06340"/>
</dbReference>
<dbReference type="GeneID" id="88184045"/>
<dbReference type="KEGG" id="avn:Avin_06340"/>
<dbReference type="eggNOG" id="COG0186">
    <property type="taxonomic scope" value="Bacteria"/>
</dbReference>
<dbReference type="HOGENOM" id="CLU_073626_1_1_6"/>
<dbReference type="OrthoDB" id="9811714at2"/>
<dbReference type="Proteomes" id="UP000002424">
    <property type="component" value="Chromosome"/>
</dbReference>
<dbReference type="GO" id="GO:0022627">
    <property type="term" value="C:cytosolic small ribosomal subunit"/>
    <property type="evidence" value="ECO:0007669"/>
    <property type="project" value="TreeGrafter"/>
</dbReference>
<dbReference type="GO" id="GO:0019843">
    <property type="term" value="F:rRNA binding"/>
    <property type="evidence" value="ECO:0007669"/>
    <property type="project" value="UniProtKB-UniRule"/>
</dbReference>
<dbReference type="GO" id="GO:0003735">
    <property type="term" value="F:structural constituent of ribosome"/>
    <property type="evidence" value="ECO:0007669"/>
    <property type="project" value="InterPro"/>
</dbReference>
<dbReference type="GO" id="GO:0006412">
    <property type="term" value="P:translation"/>
    <property type="evidence" value="ECO:0007669"/>
    <property type="project" value="UniProtKB-UniRule"/>
</dbReference>
<dbReference type="CDD" id="cd00364">
    <property type="entry name" value="Ribosomal_uS17"/>
    <property type="match status" value="1"/>
</dbReference>
<dbReference type="FunFam" id="2.40.50.140:FF:000014">
    <property type="entry name" value="30S ribosomal protein S17"/>
    <property type="match status" value="1"/>
</dbReference>
<dbReference type="Gene3D" id="2.40.50.140">
    <property type="entry name" value="Nucleic acid-binding proteins"/>
    <property type="match status" value="1"/>
</dbReference>
<dbReference type="HAMAP" id="MF_01345_B">
    <property type="entry name" value="Ribosomal_uS17_B"/>
    <property type="match status" value="1"/>
</dbReference>
<dbReference type="InterPro" id="IPR012340">
    <property type="entry name" value="NA-bd_OB-fold"/>
</dbReference>
<dbReference type="InterPro" id="IPR000266">
    <property type="entry name" value="Ribosomal_uS17"/>
</dbReference>
<dbReference type="InterPro" id="IPR019984">
    <property type="entry name" value="Ribosomal_uS17_bact/chlr"/>
</dbReference>
<dbReference type="NCBIfam" id="NF004123">
    <property type="entry name" value="PRK05610.1"/>
    <property type="match status" value="1"/>
</dbReference>
<dbReference type="NCBIfam" id="TIGR03635">
    <property type="entry name" value="uS17_bact"/>
    <property type="match status" value="1"/>
</dbReference>
<dbReference type="PANTHER" id="PTHR10744">
    <property type="entry name" value="40S RIBOSOMAL PROTEIN S11 FAMILY MEMBER"/>
    <property type="match status" value="1"/>
</dbReference>
<dbReference type="PANTHER" id="PTHR10744:SF1">
    <property type="entry name" value="SMALL RIBOSOMAL SUBUNIT PROTEIN US17M"/>
    <property type="match status" value="1"/>
</dbReference>
<dbReference type="Pfam" id="PF00366">
    <property type="entry name" value="Ribosomal_S17"/>
    <property type="match status" value="1"/>
</dbReference>
<dbReference type="PRINTS" id="PR00973">
    <property type="entry name" value="RIBOSOMALS17"/>
</dbReference>
<dbReference type="SUPFAM" id="SSF50249">
    <property type="entry name" value="Nucleic acid-binding proteins"/>
    <property type="match status" value="1"/>
</dbReference>